<feature type="chain" id="PRO_0000202728" description="Putative uncharacterized protein HUR1">
    <location>
        <begin position="1"/>
        <end position="110"/>
    </location>
</feature>
<feature type="transmembrane region" description="Helical" evidence="1">
    <location>
        <begin position="18"/>
        <end position="34"/>
    </location>
</feature>
<accession>P45820</accession>
<accession>D6VTY4</accession>
<name>HUR1_YEAST</name>
<sequence length="110" mass="12515">MFILVSVVNICTYIHLHMFPLISTFTSIGLGVLMKDKGKEGKTIKAQNVTYQTFEKYVESSSFFFLVHNFLNSSTMKTLLLMSNNNSISEIPSFSVLKILWKNGIYIAHI</sequence>
<gene>
    <name type="primary">HUR1</name>
    <name type="ordered locus">YGL168W</name>
    <name type="ORF">G1663</name>
</gene>
<comment type="subcellular location">
    <subcellularLocation>
        <location evidence="3">Membrane</location>
        <topology evidence="3">Single-pass membrane protein</topology>
    </subcellularLocation>
</comment>
<comment type="disruption phenotype">
    <text evidence="2">No increased sensitivity to hydroxyurea.</text>
</comment>
<comment type="caution">
    <text evidence="4 5">Deletion HUR1 has been reported to cause increased sensitivity to hydroxyurea (PubMed:12615994). However, HUR1 partially overlaps with PMR1 and a later analysis revealed that deletion of PMR1 but not HUR1 affected resistance to hydroxyurea (PubMed:18069899).</text>
</comment>
<dbReference type="EMBL" id="X85757">
    <property type="protein sequence ID" value="CAA59761.1"/>
    <property type="molecule type" value="Genomic_DNA"/>
</dbReference>
<dbReference type="EMBL" id="Z72690">
    <property type="protein sequence ID" value="CAA96879.1"/>
    <property type="molecule type" value="Genomic_DNA"/>
</dbReference>
<dbReference type="EMBL" id="BK006941">
    <property type="protein sequence ID" value="DAA07945.1"/>
    <property type="molecule type" value="Genomic_DNA"/>
</dbReference>
<dbReference type="PIR" id="S59652">
    <property type="entry name" value="S59652"/>
</dbReference>
<dbReference type="RefSeq" id="NP_011347.1">
    <property type="nucleotide sequence ID" value="NM_001181033.1"/>
</dbReference>
<dbReference type="BioGRID" id="33086">
    <property type="interactions" value="579"/>
</dbReference>
<dbReference type="DIP" id="DIP-4765N"/>
<dbReference type="FunCoup" id="P45820">
    <property type="interactions" value="34"/>
</dbReference>
<dbReference type="STRING" id="4932.YGL168W"/>
<dbReference type="PaxDb" id="4932-YGL168W"/>
<dbReference type="EnsemblFungi" id="YGL168W_mRNA">
    <property type="protein sequence ID" value="YGL168W"/>
    <property type="gene ID" value="YGL168W"/>
</dbReference>
<dbReference type="GeneID" id="852708"/>
<dbReference type="KEGG" id="sce:YGL168W"/>
<dbReference type="AGR" id="SGD:S000003136"/>
<dbReference type="SGD" id="S000003136">
    <property type="gene designation" value="HUR1"/>
</dbReference>
<dbReference type="VEuPathDB" id="FungiDB:YGL168W"/>
<dbReference type="HOGENOM" id="CLU_2172517_0_0_1"/>
<dbReference type="InParanoid" id="P45820"/>
<dbReference type="BioCyc" id="YEAST:G3O-30656-MONOMER"/>
<dbReference type="BioGRID-ORCS" id="852708">
    <property type="hits" value="0 hits in 10 CRISPR screens"/>
</dbReference>
<dbReference type="PRO" id="PR:P45820"/>
<dbReference type="Proteomes" id="UP000002311">
    <property type="component" value="Chromosome VII"/>
</dbReference>
<dbReference type="RNAct" id="P45820">
    <property type="molecule type" value="protein"/>
</dbReference>
<dbReference type="GO" id="GO:0016020">
    <property type="term" value="C:membrane"/>
    <property type="evidence" value="ECO:0007669"/>
    <property type="project" value="UniProtKB-SubCell"/>
</dbReference>
<dbReference type="GO" id="GO:0006260">
    <property type="term" value="P:DNA replication"/>
    <property type="evidence" value="ECO:0000315"/>
    <property type="project" value="SGD"/>
</dbReference>
<dbReference type="GO" id="GO:0006303">
    <property type="term" value="P:double-strand break repair via nonhomologous end joining"/>
    <property type="evidence" value="ECO:0000315"/>
    <property type="project" value="SGD"/>
</dbReference>
<dbReference type="GO" id="GO:0035825">
    <property type="term" value="P:homologous recombination"/>
    <property type="evidence" value="ECO:0000315"/>
    <property type="project" value="SGD"/>
</dbReference>
<dbReference type="GO" id="GO:0016236">
    <property type="term" value="P:macroautophagy"/>
    <property type="evidence" value="ECO:0000315"/>
    <property type="project" value="SGD"/>
</dbReference>
<evidence type="ECO:0000255" key="1"/>
<evidence type="ECO:0000269" key="2">
    <source>
    </source>
</evidence>
<evidence type="ECO:0000305" key="3"/>
<evidence type="ECO:0000305" key="4">
    <source>
    </source>
</evidence>
<evidence type="ECO:0000305" key="5">
    <source>
    </source>
</evidence>
<protein>
    <recommendedName>
        <fullName>Putative uncharacterized protein HUR1</fullName>
    </recommendedName>
</protein>
<proteinExistence type="predicted"/>
<keyword id="KW-0472">Membrane</keyword>
<keyword id="KW-1185">Reference proteome</keyword>
<keyword id="KW-0812">Transmembrane</keyword>
<keyword id="KW-1133">Transmembrane helix</keyword>
<organism>
    <name type="scientific">Saccharomyces cerevisiae (strain ATCC 204508 / S288c)</name>
    <name type="common">Baker's yeast</name>
    <dbReference type="NCBI Taxonomy" id="559292"/>
    <lineage>
        <taxon>Eukaryota</taxon>
        <taxon>Fungi</taxon>
        <taxon>Dikarya</taxon>
        <taxon>Ascomycota</taxon>
        <taxon>Saccharomycotina</taxon>
        <taxon>Saccharomycetes</taxon>
        <taxon>Saccharomycetales</taxon>
        <taxon>Saccharomycetaceae</taxon>
        <taxon>Saccharomyces</taxon>
    </lineage>
</organism>
<reference key="1">
    <citation type="journal article" date="1996" name="Yeast">
        <title>A putative helicase, the SUA5, PMR1, tRNALys1 genes and four open reading frames have been detected in the DNA sequence of an 8.8 kb fragment of the left arm of chromosome VII of Saccharomyces cerevisiae.</title>
        <authorList>
            <person name="Klima R."/>
            <person name="Coglievina M."/>
            <person name="Zaccaria P."/>
            <person name="Bertani I."/>
            <person name="Bruschi C.V."/>
        </authorList>
    </citation>
    <scope>NUCLEOTIDE SEQUENCE [GENOMIC DNA]</scope>
    <source>
        <strain>ATCC 96604 / S288c / FY1679</strain>
    </source>
</reference>
<reference key="2">
    <citation type="journal article" date="1997" name="Nature">
        <title>The nucleotide sequence of Saccharomyces cerevisiae chromosome VII.</title>
        <authorList>
            <person name="Tettelin H."/>
            <person name="Agostoni-Carbone M.L."/>
            <person name="Albermann K."/>
            <person name="Albers M."/>
            <person name="Arroyo J."/>
            <person name="Backes U."/>
            <person name="Barreiros T."/>
            <person name="Bertani I."/>
            <person name="Bjourson A.J."/>
            <person name="Brueckner M."/>
            <person name="Bruschi C.V."/>
            <person name="Carignani G."/>
            <person name="Castagnoli L."/>
            <person name="Cerdan E."/>
            <person name="Clemente M.L."/>
            <person name="Coblenz A."/>
            <person name="Coglievina M."/>
            <person name="Coissac E."/>
            <person name="Defoor E."/>
            <person name="Del Bino S."/>
            <person name="Delius H."/>
            <person name="Delneri D."/>
            <person name="de Wergifosse P."/>
            <person name="Dujon B."/>
            <person name="Durand P."/>
            <person name="Entian K.-D."/>
            <person name="Eraso P."/>
            <person name="Escribano V."/>
            <person name="Fabiani L."/>
            <person name="Fartmann B."/>
            <person name="Feroli F."/>
            <person name="Feuermann M."/>
            <person name="Frontali L."/>
            <person name="Garcia-Gonzalez M."/>
            <person name="Garcia-Saez M.I."/>
            <person name="Goffeau A."/>
            <person name="Guerreiro P."/>
            <person name="Hani J."/>
            <person name="Hansen M."/>
            <person name="Hebling U."/>
            <person name="Hernandez K."/>
            <person name="Heumann K."/>
            <person name="Hilger F."/>
            <person name="Hofmann B."/>
            <person name="Indge K.J."/>
            <person name="James C.M."/>
            <person name="Klima R."/>
            <person name="Koetter P."/>
            <person name="Kramer B."/>
            <person name="Kramer W."/>
            <person name="Lauquin G."/>
            <person name="Leuther H."/>
            <person name="Louis E.J."/>
            <person name="Maillier E."/>
            <person name="Marconi A."/>
            <person name="Martegani E."/>
            <person name="Mazon M.J."/>
            <person name="Mazzoni C."/>
            <person name="McReynolds A.D.K."/>
            <person name="Melchioretto P."/>
            <person name="Mewes H.-W."/>
            <person name="Minenkova O."/>
            <person name="Mueller-Auer S."/>
            <person name="Nawrocki A."/>
            <person name="Netter P."/>
            <person name="Neu R."/>
            <person name="Nombela C."/>
            <person name="Oliver S.G."/>
            <person name="Panzeri L."/>
            <person name="Paoluzi S."/>
            <person name="Plevani P."/>
            <person name="Portetelle D."/>
            <person name="Portillo F."/>
            <person name="Potier S."/>
            <person name="Purnelle B."/>
            <person name="Rieger M."/>
            <person name="Riles L."/>
            <person name="Rinaldi T."/>
            <person name="Robben J."/>
            <person name="Rodrigues-Pousada C."/>
            <person name="Rodriguez-Belmonte E."/>
            <person name="Rodriguez-Torres A.M."/>
            <person name="Rose M."/>
            <person name="Ruzzi M."/>
            <person name="Saliola M."/>
            <person name="Sanchez-Perez M."/>
            <person name="Schaefer B."/>
            <person name="Schaefer M."/>
            <person name="Scharfe M."/>
            <person name="Schmidheini T."/>
            <person name="Schreer A."/>
            <person name="Skala J."/>
            <person name="Souciet J.-L."/>
            <person name="Steensma H.Y."/>
            <person name="Talla E."/>
            <person name="Thierry A."/>
            <person name="Vandenbol M."/>
            <person name="van der Aart Q.J.M."/>
            <person name="Van Dyck L."/>
            <person name="Vanoni M."/>
            <person name="Verhasselt P."/>
            <person name="Voet M."/>
            <person name="Volckaert G."/>
            <person name="Wambutt R."/>
            <person name="Watson M.D."/>
            <person name="Weber N."/>
            <person name="Wedler E."/>
            <person name="Wedler H."/>
            <person name="Wipfli P."/>
            <person name="Wolf K."/>
            <person name="Wright L.F."/>
            <person name="Zaccaria P."/>
            <person name="Zimmermann M."/>
            <person name="Zollner A."/>
            <person name="Kleine K."/>
        </authorList>
    </citation>
    <scope>NUCLEOTIDE SEQUENCE [LARGE SCALE GENOMIC DNA]</scope>
    <source>
        <strain>ATCC 204508 / S288c</strain>
    </source>
</reference>
<reference key="3">
    <citation type="journal article" date="2014" name="G3 (Bethesda)">
        <title>The reference genome sequence of Saccharomyces cerevisiae: Then and now.</title>
        <authorList>
            <person name="Engel S.R."/>
            <person name="Dietrich F.S."/>
            <person name="Fisk D.G."/>
            <person name="Binkley G."/>
            <person name="Balakrishnan R."/>
            <person name="Costanzo M.C."/>
            <person name="Dwight S.S."/>
            <person name="Hitz B.C."/>
            <person name="Karra K."/>
            <person name="Nash R.S."/>
            <person name="Weng S."/>
            <person name="Wong E.D."/>
            <person name="Lloyd P."/>
            <person name="Skrzypek M.S."/>
            <person name="Miyasato S.R."/>
            <person name="Simison M."/>
            <person name="Cherry J.M."/>
        </authorList>
    </citation>
    <scope>GENOME REANNOTATION</scope>
    <source>
        <strain>ATCC 204508 / S288c</strain>
    </source>
</reference>
<reference key="4">
    <citation type="journal article" date="2003" name="Proc. Natl. Acad. Sci. U.S.A.">
        <title>Novel functions of the phosphatidylinositol metabolic pathway discovered by a chemical genomics screen with wortmannin.</title>
        <authorList>
            <person name="Zewail A."/>
            <person name="Xie M.W."/>
            <person name="Xing Y."/>
            <person name="Lin L."/>
            <person name="Zhang P.F."/>
            <person name="Zou W."/>
            <person name="Saxe J.P."/>
            <person name="Huang J."/>
        </authorList>
    </citation>
    <scope>DISRUPTION PHENOTYPE</scope>
</reference>
<reference key="5">
    <citation type="journal article" date="2007" name="PLoS Genet.">
        <title>Novel roles for selected genes in meiotic DNA processing.</title>
        <authorList>
            <person name="Jordan P.W."/>
            <person name="Klein F."/>
            <person name="Leach D.R."/>
        </authorList>
    </citation>
    <scope>CORRECTION TO DISRUPTION PHENOTYPE</scope>
</reference>